<reference key="1">
    <citation type="journal article" date="2007" name="Proc. Natl. Acad. Sci. U.S.A.">
        <title>Genome plasticity of BCG and impact on vaccine efficacy.</title>
        <authorList>
            <person name="Brosch R."/>
            <person name="Gordon S.V."/>
            <person name="Garnier T."/>
            <person name="Eiglmeier K."/>
            <person name="Frigui W."/>
            <person name="Valenti P."/>
            <person name="Dos Santos S."/>
            <person name="Duthoy S."/>
            <person name="Lacroix C."/>
            <person name="Garcia-Pelayo C."/>
            <person name="Inwald J.K."/>
            <person name="Golby P."/>
            <person name="Garcia J.N."/>
            <person name="Hewinson R.G."/>
            <person name="Behr M.A."/>
            <person name="Quail M.A."/>
            <person name="Churcher C."/>
            <person name="Barrell B.G."/>
            <person name="Parkhill J."/>
            <person name="Cole S.T."/>
        </authorList>
    </citation>
    <scope>NUCLEOTIDE SEQUENCE [LARGE SCALE GENOMIC DNA]</scope>
    <source>
        <strain>BCG / Pasteur 1173P2</strain>
    </source>
</reference>
<feature type="chain" id="PRO_1000003773" description="Nucleoid-associated protein BCG_3776c">
    <location>
        <begin position="1"/>
        <end position="133"/>
    </location>
</feature>
<feature type="region of interest" description="Disordered" evidence="2">
    <location>
        <begin position="98"/>
        <end position="133"/>
    </location>
</feature>
<feature type="compositionally biased region" description="Pro residues" evidence="2">
    <location>
        <begin position="102"/>
        <end position="113"/>
    </location>
</feature>
<sequence length="133" mass="13357">MQPGGDMSALLAQAQQMQQKLLEAQQQLANSEVHGQAGGGLVKVVVKGSGEVIGVTIDPKVVDPDDIETLQDLIVGAMRDASQQVTKMAQERLGALAGAMRPPAPPAAPPGAPGMPGMPGMPGAPGAPPVPGI</sequence>
<accession>A1KQ48</accession>
<gene>
    <name type="ordered locus">BCG_3776c</name>
</gene>
<proteinExistence type="inferred from homology"/>
<name>Y3776_MYCBP</name>
<comment type="function">
    <text evidence="1">Binds to DNA and alters its conformation. May be involved in regulation of gene expression, nucleoid organization and DNA protection.</text>
</comment>
<comment type="subunit">
    <text evidence="1">Homodimer.</text>
</comment>
<comment type="subcellular location">
    <subcellularLocation>
        <location evidence="1">Cytoplasm</location>
        <location evidence="1">Nucleoid</location>
    </subcellularLocation>
</comment>
<comment type="similarity">
    <text evidence="1">Belongs to the YbaB/EbfC family.</text>
</comment>
<keyword id="KW-0963">Cytoplasm</keyword>
<keyword id="KW-0238">DNA-binding</keyword>
<protein>
    <recommendedName>
        <fullName evidence="1">Nucleoid-associated protein BCG_3776c</fullName>
    </recommendedName>
</protein>
<organism>
    <name type="scientific">Mycobacterium bovis (strain BCG / Pasteur 1173P2)</name>
    <dbReference type="NCBI Taxonomy" id="410289"/>
    <lineage>
        <taxon>Bacteria</taxon>
        <taxon>Bacillati</taxon>
        <taxon>Actinomycetota</taxon>
        <taxon>Actinomycetes</taxon>
        <taxon>Mycobacteriales</taxon>
        <taxon>Mycobacteriaceae</taxon>
        <taxon>Mycobacterium</taxon>
        <taxon>Mycobacterium tuberculosis complex</taxon>
    </lineage>
</organism>
<dbReference type="EMBL" id="AM408590">
    <property type="protein sequence ID" value="CAL73766.1"/>
    <property type="molecule type" value="Genomic_DNA"/>
</dbReference>
<dbReference type="RefSeq" id="WP_003420408.1">
    <property type="nucleotide sequence ID" value="NC_008769.1"/>
</dbReference>
<dbReference type="SMR" id="A1KQ48"/>
<dbReference type="KEGG" id="mbb:BCG_3776c"/>
<dbReference type="HOGENOM" id="CLU_140930_4_0_11"/>
<dbReference type="Proteomes" id="UP000001472">
    <property type="component" value="Chromosome"/>
</dbReference>
<dbReference type="GO" id="GO:0043590">
    <property type="term" value="C:bacterial nucleoid"/>
    <property type="evidence" value="ECO:0007669"/>
    <property type="project" value="UniProtKB-UniRule"/>
</dbReference>
<dbReference type="GO" id="GO:0005829">
    <property type="term" value="C:cytosol"/>
    <property type="evidence" value="ECO:0007669"/>
    <property type="project" value="TreeGrafter"/>
</dbReference>
<dbReference type="GO" id="GO:0003677">
    <property type="term" value="F:DNA binding"/>
    <property type="evidence" value="ECO:0007669"/>
    <property type="project" value="UniProtKB-UniRule"/>
</dbReference>
<dbReference type="Gene3D" id="3.30.1310.10">
    <property type="entry name" value="Nucleoid-associated protein YbaB-like domain"/>
    <property type="match status" value="1"/>
</dbReference>
<dbReference type="HAMAP" id="MF_00274">
    <property type="entry name" value="DNA_YbaB_EbfC"/>
    <property type="match status" value="1"/>
</dbReference>
<dbReference type="InterPro" id="IPR036894">
    <property type="entry name" value="YbaB-like_sf"/>
</dbReference>
<dbReference type="InterPro" id="IPR004401">
    <property type="entry name" value="YbaB/EbfC"/>
</dbReference>
<dbReference type="NCBIfam" id="TIGR00103">
    <property type="entry name" value="DNA_YbaB_EbfC"/>
    <property type="match status" value="1"/>
</dbReference>
<dbReference type="PANTHER" id="PTHR33449">
    <property type="entry name" value="NUCLEOID-ASSOCIATED PROTEIN YBAB"/>
    <property type="match status" value="1"/>
</dbReference>
<dbReference type="PANTHER" id="PTHR33449:SF1">
    <property type="entry name" value="NUCLEOID-ASSOCIATED PROTEIN YBAB"/>
    <property type="match status" value="1"/>
</dbReference>
<dbReference type="Pfam" id="PF02575">
    <property type="entry name" value="YbaB_DNA_bd"/>
    <property type="match status" value="1"/>
</dbReference>
<dbReference type="PIRSF" id="PIRSF004555">
    <property type="entry name" value="UCP004555"/>
    <property type="match status" value="1"/>
</dbReference>
<dbReference type="SUPFAM" id="SSF82607">
    <property type="entry name" value="YbaB-like"/>
    <property type="match status" value="1"/>
</dbReference>
<evidence type="ECO:0000255" key="1">
    <source>
        <dbReference type="HAMAP-Rule" id="MF_00274"/>
    </source>
</evidence>
<evidence type="ECO:0000256" key="2">
    <source>
        <dbReference type="SAM" id="MobiDB-lite"/>
    </source>
</evidence>